<name>RECA_CHLAD</name>
<reference key="1">
    <citation type="submission" date="2008-12" db="EMBL/GenBank/DDBJ databases">
        <title>Complete sequence of Chloroflexus aggregans DSM 9485.</title>
        <authorList>
            <consortium name="US DOE Joint Genome Institute"/>
            <person name="Lucas S."/>
            <person name="Copeland A."/>
            <person name="Lapidus A."/>
            <person name="Glavina del Rio T."/>
            <person name="Dalin E."/>
            <person name="Tice H."/>
            <person name="Pitluck S."/>
            <person name="Foster B."/>
            <person name="Larimer F."/>
            <person name="Land M."/>
            <person name="Hauser L."/>
            <person name="Kyrpides N."/>
            <person name="Mikhailova N."/>
            <person name="Bryant D.A."/>
            <person name="Richardson P."/>
        </authorList>
    </citation>
    <scope>NUCLEOTIDE SEQUENCE [LARGE SCALE GENOMIC DNA]</scope>
    <source>
        <strain>MD-66 / DSM 9485</strain>
    </source>
</reference>
<accession>B8GAQ9</accession>
<feature type="chain" id="PRO_1000193298" description="Protein RecA">
    <location>
        <begin position="1"/>
        <end position="351"/>
    </location>
</feature>
<feature type="binding site" evidence="1">
    <location>
        <begin position="68"/>
        <end position="75"/>
    </location>
    <ligand>
        <name>ATP</name>
        <dbReference type="ChEBI" id="CHEBI:30616"/>
    </ligand>
</feature>
<organism>
    <name type="scientific">Chloroflexus aggregans (strain MD-66 / DSM 9485)</name>
    <dbReference type="NCBI Taxonomy" id="326427"/>
    <lineage>
        <taxon>Bacteria</taxon>
        <taxon>Bacillati</taxon>
        <taxon>Chloroflexota</taxon>
        <taxon>Chloroflexia</taxon>
        <taxon>Chloroflexales</taxon>
        <taxon>Chloroflexineae</taxon>
        <taxon>Chloroflexaceae</taxon>
        <taxon>Chloroflexus</taxon>
    </lineage>
</organism>
<sequence>MAITPEKEKALAAAMAQIDRKFGKGSIMKMGEVGGRLAIEAIPTGSIALDIALGIGGVPRGRVIEIFGPESSGKTTLAQHIIAEAQKMGGVGAFIDAEHAFDPVYAARCGVNISDLLVSQPDTGEQALEICEMLVRSNAVDVIVIDSVAALVPRAEIEGDMGDSMPGMQARLMSQALRKLSGAISKSRAVVIFINQLRMKIGVMFGSPETTTGGQALKFYASVRLDIRRIETLKQGQEAIGSRVRVKVIKNKVAPPFRQAEFDILANEGISREGNIIDIGTELGIIRKSGAWFYLGEDRLGQGRENVREFLKNNPALTDEIERLIKAQALTNPSAIAPSADIGDDDGVFEE</sequence>
<evidence type="ECO:0000255" key="1">
    <source>
        <dbReference type="HAMAP-Rule" id="MF_00268"/>
    </source>
</evidence>
<keyword id="KW-0067">ATP-binding</keyword>
<keyword id="KW-0963">Cytoplasm</keyword>
<keyword id="KW-0227">DNA damage</keyword>
<keyword id="KW-0233">DNA recombination</keyword>
<keyword id="KW-0234">DNA repair</keyword>
<keyword id="KW-0238">DNA-binding</keyword>
<keyword id="KW-0547">Nucleotide-binding</keyword>
<keyword id="KW-0742">SOS response</keyword>
<protein>
    <recommendedName>
        <fullName evidence="1">Protein RecA</fullName>
    </recommendedName>
    <alternativeName>
        <fullName evidence="1">Recombinase A</fullName>
    </alternativeName>
</protein>
<dbReference type="EMBL" id="CP001337">
    <property type="protein sequence ID" value="ACL24648.1"/>
    <property type="molecule type" value="Genomic_DNA"/>
</dbReference>
<dbReference type="RefSeq" id="WP_015940507.1">
    <property type="nucleotide sequence ID" value="NC_011831.1"/>
</dbReference>
<dbReference type="SMR" id="B8GAQ9"/>
<dbReference type="STRING" id="326427.Cagg_1747"/>
<dbReference type="KEGG" id="cag:Cagg_1747"/>
<dbReference type="eggNOG" id="COG0468">
    <property type="taxonomic scope" value="Bacteria"/>
</dbReference>
<dbReference type="HOGENOM" id="CLU_040469_3_2_0"/>
<dbReference type="OrthoDB" id="9776733at2"/>
<dbReference type="Proteomes" id="UP000002508">
    <property type="component" value="Chromosome"/>
</dbReference>
<dbReference type="GO" id="GO:0005829">
    <property type="term" value="C:cytosol"/>
    <property type="evidence" value="ECO:0007669"/>
    <property type="project" value="TreeGrafter"/>
</dbReference>
<dbReference type="GO" id="GO:0005524">
    <property type="term" value="F:ATP binding"/>
    <property type="evidence" value="ECO:0007669"/>
    <property type="project" value="UniProtKB-UniRule"/>
</dbReference>
<dbReference type="GO" id="GO:0016887">
    <property type="term" value="F:ATP hydrolysis activity"/>
    <property type="evidence" value="ECO:0007669"/>
    <property type="project" value="InterPro"/>
</dbReference>
<dbReference type="GO" id="GO:0140664">
    <property type="term" value="F:ATP-dependent DNA damage sensor activity"/>
    <property type="evidence" value="ECO:0007669"/>
    <property type="project" value="InterPro"/>
</dbReference>
<dbReference type="GO" id="GO:0003684">
    <property type="term" value="F:damaged DNA binding"/>
    <property type="evidence" value="ECO:0007669"/>
    <property type="project" value="UniProtKB-UniRule"/>
</dbReference>
<dbReference type="GO" id="GO:0003697">
    <property type="term" value="F:single-stranded DNA binding"/>
    <property type="evidence" value="ECO:0007669"/>
    <property type="project" value="UniProtKB-UniRule"/>
</dbReference>
<dbReference type="GO" id="GO:0006310">
    <property type="term" value="P:DNA recombination"/>
    <property type="evidence" value="ECO:0007669"/>
    <property type="project" value="UniProtKB-UniRule"/>
</dbReference>
<dbReference type="GO" id="GO:0006281">
    <property type="term" value="P:DNA repair"/>
    <property type="evidence" value="ECO:0007669"/>
    <property type="project" value="UniProtKB-UniRule"/>
</dbReference>
<dbReference type="GO" id="GO:0009432">
    <property type="term" value="P:SOS response"/>
    <property type="evidence" value="ECO:0007669"/>
    <property type="project" value="UniProtKB-UniRule"/>
</dbReference>
<dbReference type="CDD" id="cd00983">
    <property type="entry name" value="RecA"/>
    <property type="match status" value="1"/>
</dbReference>
<dbReference type="FunFam" id="3.40.50.300:FF:000087">
    <property type="entry name" value="Recombinase RecA"/>
    <property type="match status" value="1"/>
</dbReference>
<dbReference type="Gene3D" id="3.40.50.300">
    <property type="entry name" value="P-loop containing nucleotide triphosphate hydrolases"/>
    <property type="match status" value="1"/>
</dbReference>
<dbReference type="HAMAP" id="MF_00268">
    <property type="entry name" value="RecA"/>
    <property type="match status" value="1"/>
</dbReference>
<dbReference type="InterPro" id="IPR003593">
    <property type="entry name" value="AAA+_ATPase"/>
</dbReference>
<dbReference type="InterPro" id="IPR013765">
    <property type="entry name" value="DNA_recomb/repair_RecA"/>
</dbReference>
<dbReference type="InterPro" id="IPR020584">
    <property type="entry name" value="DNA_recomb/repair_RecA_CS"/>
</dbReference>
<dbReference type="InterPro" id="IPR027417">
    <property type="entry name" value="P-loop_NTPase"/>
</dbReference>
<dbReference type="InterPro" id="IPR049261">
    <property type="entry name" value="RecA-like_C"/>
</dbReference>
<dbReference type="InterPro" id="IPR049428">
    <property type="entry name" value="RecA-like_N"/>
</dbReference>
<dbReference type="InterPro" id="IPR020588">
    <property type="entry name" value="RecA_ATP-bd"/>
</dbReference>
<dbReference type="InterPro" id="IPR023400">
    <property type="entry name" value="RecA_C_sf"/>
</dbReference>
<dbReference type="InterPro" id="IPR020587">
    <property type="entry name" value="RecA_monomer-monomer_interface"/>
</dbReference>
<dbReference type="NCBIfam" id="TIGR02012">
    <property type="entry name" value="tigrfam_recA"/>
    <property type="match status" value="1"/>
</dbReference>
<dbReference type="PANTHER" id="PTHR45900:SF1">
    <property type="entry name" value="MITOCHONDRIAL DNA REPAIR PROTEIN RECA HOMOLOG-RELATED"/>
    <property type="match status" value="1"/>
</dbReference>
<dbReference type="PANTHER" id="PTHR45900">
    <property type="entry name" value="RECA"/>
    <property type="match status" value="1"/>
</dbReference>
<dbReference type="Pfam" id="PF00154">
    <property type="entry name" value="RecA"/>
    <property type="match status" value="1"/>
</dbReference>
<dbReference type="Pfam" id="PF21096">
    <property type="entry name" value="RecA_C"/>
    <property type="match status" value="1"/>
</dbReference>
<dbReference type="PRINTS" id="PR00142">
    <property type="entry name" value="RECA"/>
</dbReference>
<dbReference type="SMART" id="SM00382">
    <property type="entry name" value="AAA"/>
    <property type="match status" value="1"/>
</dbReference>
<dbReference type="SUPFAM" id="SSF52540">
    <property type="entry name" value="P-loop containing nucleoside triphosphate hydrolases"/>
    <property type="match status" value="1"/>
</dbReference>
<dbReference type="SUPFAM" id="SSF54752">
    <property type="entry name" value="RecA protein, C-terminal domain"/>
    <property type="match status" value="1"/>
</dbReference>
<dbReference type="PROSITE" id="PS00321">
    <property type="entry name" value="RECA_1"/>
    <property type="match status" value="1"/>
</dbReference>
<dbReference type="PROSITE" id="PS50162">
    <property type="entry name" value="RECA_2"/>
    <property type="match status" value="1"/>
</dbReference>
<dbReference type="PROSITE" id="PS50163">
    <property type="entry name" value="RECA_3"/>
    <property type="match status" value="1"/>
</dbReference>
<proteinExistence type="inferred from homology"/>
<gene>
    <name evidence="1" type="primary">recA</name>
    <name type="ordered locus">Cagg_1747</name>
</gene>
<comment type="function">
    <text evidence="1">Can catalyze the hydrolysis of ATP in the presence of single-stranded DNA, the ATP-dependent uptake of single-stranded DNA by duplex DNA, and the ATP-dependent hybridization of homologous single-stranded DNAs. It interacts with LexA causing its activation and leading to its autocatalytic cleavage.</text>
</comment>
<comment type="subcellular location">
    <subcellularLocation>
        <location evidence="1">Cytoplasm</location>
    </subcellularLocation>
</comment>
<comment type="similarity">
    <text evidence="1">Belongs to the RecA family.</text>
</comment>